<organism>
    <name type="scientific">Pseudomonas entomophila (strain L48)</name>
    <dbReference type="NCBI Taxonomy" id="384676"/>
    <lineage>
        <taxon>Bacteria</taxon>
        <taxon>Pseudomonadati</taxon>
        <taxon>Pseudomonadota</taxon>
        <taxon>Gammaproteobacteria</taxon>
        <taxon>Pseudomonadales</taxon>
        <taxon>Pseudomonadaceae</taxon>
        <taxon>Pseudomonas</taxon>
    </lineage>
</organism>
<proteinExistence type="inferred from homology"/>
<accession>Q1I629</accession>
<reference key="1">
    <citation type="journal article" date="2006" name="Nat. Biotechnol.">
        <title>Complete genome sequence of the entomopathogenic and metabolically versatile soil bacterium Pseudomonas entomophila.</title>
        <authorList>
            <person name="Vodovar N."/>
            <person name="Vallenet D."/>
            <person name="Cruveiller S."/>
            <person name="Rouy Z."/>
            <person name="Barbe V."/>
            <person name="Acosta C."/>
            <person name="Cattolico L."/>
            <person name="Jubin C."/>
            <person name="Lajus A."/>
            <person name="Segurens B."/>
            <person name="Vacherie B."/>
            <person name="Wincker P."/>
            <person name="Weissenbach J."/>
            <person name="Lemaitre B."/>
            <person name="Medigue C."/>
            <person name="Boccard F."/>
        </authorList>
    </citation>
    <scope>NUCLEOTIDE SEQUENCE [LARGE SCALE GENOMIC DNA]</scope>
    <source>
        <strain>L48</strain>
    </source>
</reference>
<name>RRF_PSEE4</name>
<protein>
    <recommendedName>
        <fullName evidence="1">Ribosome-recycling factor</fullName>
        <shortName evidence="1">RRF</shortName>
    </recommendedName>
    <alternativeName>
        <fullName evidence="1">Ribosome-releasing factor</fullName>
    </alternativeName>
</protein>
<gene>
    <name evidence="1" type="primary">frr</name>
    <name type="ordered locus">PSEEN4217</name>
</gene>
<evidence type="ECO:0000255" key="1">
    <source>
        <dbReference type="HAMAP-Rule" id="MF_00040"/>
    </source>
</evidence>
<sequence length="185" mass="20146">MINDIKKDAQERMGKSIEALGRNLASIRTGRAHPSILDSVKVPAWGSDMPLNQVAAITVEDARTLKIVAHDKNLSAAIEKAILTSDLGLNPSSAGTTIRVPMPALTEETRKGYTKQASSVAEDAKVAVRNVRRDALADLKKLTKDKEISEDEERRAADEIQKLTDKFVAEIDAAFKAKEKDLLAV</sequence>
<dbReference type="EMBL" id="CT573326">
    <property type="protein sequence ID" value="CAK16906.1"/>
    <property type="molecule type" value="Genomic_DNA"/>
</dbReference>
<dbReference type="RefSeq" id="WP_011535277.1">
    <property type="nucleotide sequence ID" value="NC_008027.1"/>
</dbReference>
<dbReference type="SMR" id="Q1I629"/>
<dbReference type="STRING" id="384676.PSEEN4217"/>
<dbReference type="GeneID" id="32807224"/>
<dbReference type="KEGG" id="pen:PSEEN4217"/>
<dbReference type="eggNOG" id="COG0233">
    <property type="taxonomic scope" value="Bacteria"/>
</dbReference>
<dbReference type="HOGENOM" id="CLU_073981_2_0_6"/>
<dbReference type="OrthoDB" id="9804006at2"/>
<dbReference type="Proteomes" id="UP000000658">
    <property type="component" value="Chromosome"/>
</dbReference>
<dbReference type="GO" id="GO:0005829">
    <property type="term" value="C:cytosol"/>
    <property type="evidence" value="ECO:0007669"/>
    <property type="project" value="GOC"/>
</dbReference>
<dbReference type="GO" id="GO:0043023">
    <property type="term" value="F:ribosomal large subunit binding"/>
    <property type="evidence" value="ECO:0007669"/>
    <property type="project" value="TreeGrafter"/>
</dbReference>
<dbReference type="GO" id="GO:0002184">
    <property type="term" value="P:cytoplasmic translational termination"/>
    <property type="evidence" value="ECO:0007669"/>
    <property type="project" value="TreeGrafter"/>
</dbReference>
<dbReference type="CDD" id="cd00520">
    <property type="entry name" value="RRF"/>
    <property type="match status" value="1"/>
</dbReference>
<dbReference type="FunFam" id="1.10.132.20:FF:000001">
    <property type="entry name" value="Ribosome-recycling factor"/>
    <property type="match status" value="1"/>
</dbReference>
<dbReference type="FunFam" id="3.30.1360.40:FF:000001">
    <property type="entry name" value="Ribosome-recycling factor"/>
    <property type="match status" value="1"/>
</dbReference>
<dbReference type="Gene3D" id="3.30.1360.40">
    <property type="match status" value="1"/>
</dbReference>
<dbReference type="Gene3D" id="1.10.132.20">
    <property type="entry name" value="Ribosome-recycling factor"/>
    <property type="match status" value="1"/>
</dbReference>
<dbReference type="HAMAP" id="MF_00040">
    <property type="entry name" value="RRF"/>
    <property type="match status" value="1"/>
</dbReference>
<dbReference type="InterPro" id="IPR002661">
    <property type="entry name" value="Ribosome_recyc_fac"/>
</dbReference>
<dbReference type="InterPro" id="IPR023584">
    <property type="entry name" value="Ribosome_recyc_fac_dom"/>
</dbReference>
<dbReference type="InterPro" id="IPR036191">
    <property type="entry name" value="RRF_sf"/>
</dbReference>
<dbReference type="NCBIfam" id="TIGR00496">
    <property type="entry name" value="frr"/>
    <property type="match status" value="1"/>
</dbReference>
<dbReference type="PANTHER" id="PTHR20982:SF3">
    <property type="entry name" value="MITOCHONDRIAL RIBOSOME RECYCLING FACTOR PSEUDO 1"/>
    <property type="match status" value="1"/>
</dbReference>
<dbReference type="PANTHER" id="PTHR20982">
    <property type="entry name" value="RIBOSOME RECYCLING FACTOR"/>
    <property type="match status" value="1"/>
</dbReference>
<dbReference type="Pfam" id="PF01765">
    <property type="entry name" value="RRF"/>
    <property type="match status" value="1"/>
</dbReference>
<dbReference type="SUPFAM" id="SSF55194">
    <property type="entry name" value="Ribosome recycling factor, RRF"/>
    <property type="match status" value="1"/>
</dbReference>
<keyword id="KW-0963">Cytoplasm</keyword>
<keyword id="KW-0648">Protein biosynthesis</keyword>
<comment type="function">
    <text evidence="1">Responsible for the release of ribosomes from messenger RNA at the termination of protein biosynthesis. May increase the efficiency of translation by recycling ribosomes from one round of translation to another.</text>
</comment>
<comment type="subcellular location">
    <subcellularLocation>
        <location evidence="1">Cytoplasm</location>
    </subcellularLocation>
</comment>
<comment type="similarity">
    <text evidence="1">Belongs to the RRF family.</text>
</comment>
<feature type="chain" id="PRO_1000003232" description="Ribosome-recycling factor">
    <location>
        <begin position="1"/>
        <end position="185"/>
    </location>
</feature>